<reference key="1">
    <citation type="journal article" date="1992" name="Gene">
        <title>Structure, organization and regulation of a rat cysteine proteinase inhibitor-encoding gene.</title>
        <authorList>
            <person name="Cox J.L."/>
            <person name="Shaw P.A."/>
        </authorList>
    </citation>
    <scope>NUCLEOTIDE SEQUENCE [GENOMIC DNA]</scope>
</reference>
<reference key="2">
    <citation type="journal article" date="1988" name="J. Biol. Chem.">
        <title>Cloning and sequencing of cDNA encoding a rat salivary cysteine proteinase inhibitor inducible by beta-adrenergic agonists.</title>
        <authorList>
            <person name="Shaw P.A."/>
            <person name="Cox J.L."/>
            <person name="Barka T."/>
            <person name="Naito Y."/>
        </authorList>
    </citation>
    <scope>NUCLEOTIDE SEQUENCE [MRNA] OF 10-141</scope>
    <source>
        <strain>Sprague-Dawley</strain>
        <tissue>Submandibular gland</tissue>
    </source>
</reference>
<reference key="3">
    <citation type="journal article" date="1989" name="Arch. Biochem. Biophys.">
        <title>Amino acid sequence of an inducible cysteine proteinase inhibitor (cystatin) from submandibular glands of isoproterenol-treated rats.</title>
        <authorList>
            <person name="Bedi G.S."/>
        </authorList>
    </citation>
    <scope>PROTEIN SEQUENCE OF 28-132</scope>
    <scope>DISULFIDE BONDS</scope>
    <source>
        <tissue>Submandibular gland</tissue>
    </source>
</reference>
<proteinExistence type="evidence at protein level"/>
<comment type="function">
    <text>This protein strongly inhibits papain and ficin, partially inhibits stem bromelain and bovine cathepsin C, but does not inhibit porcine cathepsin B or clostripain. Papain is inhibited non-competitively.</text>
</comment>
<comment type="subcellular location">
    <subcellularLocation>
        <location>Secreted</location>
    </subcellularLocation>
</comment>
<comment type="tissue specificity">
    <text>Found in saliva, tears, urine and seminal fluid.</text>
</comment>
<comment type="similarity">
    <text evidence="2">Belongs to the cystatin family.</text>
</comment>
<organism>
    <name type="scientific">Rattus norvegicus</name>
    <name type="common">Rat</name>
    <dbReference type="NCBI Taxonomy" id="10116"/>
    <lineage>
        <taxon>Eukaryota</taxon>
        <taxon>Metazoa</taxon>
        <taxon>Chordata</taxon>
        <taxon>Craniata</taxon>
        <taxon>Vertebrata</taxon>
        <taxon>Euteleostomi</taxon>
        <taxon>Mammalia</taxon>
        <taxon>Eutheria</taxon>
        <taxon>Euarchontoglires</taxon>
        <taxon>Glires</taxon>
        <taxon>Rodentia</taxon>
        <taxon>Myomorpha</taxon>
        <taxon>Muroidea</taxon>
        <taxon>Muridae</taxon>
        <taxon>Murinae</taxon>
        <taxon>Rattus</taxon>
    </lineage>
</organism>
<gene>
    <name type="primary">Cst4</name>
    <name type="synonym">Cyss</name>
</gene>
<accession>P19313</accession>
<keyword id="KW-0903">Direct protein sequencing</keyword>
<keyword id="KW-1015">Disulfide bond</keyword>
<keyword id="KW-0646">Protease inhibitor</keyword>
<keyword id="KW-1185">Reference proteome</keyword>
<keyword id="KW-0964">Secreted</keyword>
<keyword id="KW-0732">Signal</keyword>
<keyword id="KW-0789">Thiol protease inhibitor</keyword>
<evidence type="ECO:0000269" key="1">
    <source>
    </source>
</evidence>
<evidence type="ECO:0000305" key="2"/>
<protein>
    <recommendedName>
        <fullName>Cystatin-S</fullName>
    </recommendedName>
    <alternativeName>
        <fullName>Cystatin-1</fullName>
    </alternativeName>
    <alternativeName>
        <fullName>Protein LM</fullName>
    </alternativeName>
</protein>
<name>CYTS_RAT</name>
<sequence>MAYLLHAQLFLLTTFILVLNMRLCPVLGHFLGGIEKSSMEEEGASEALNYAVNEYNEKNSDLYLSRVVEVKDVQKQVVAGTKFFFDVILGKTICLKTQGDLTNCPLNEEADQQEHEFCSFVVHDIPWENYIVLLSSSCHSI</sequence>
<feature type="signal peptide" evidence="1">
    <location>
        <begin position="1"/>
        <end position="27"/>
    </location>
</feature>
<feature type="chain" id="PRO_0000006651" description="Cystatin-S">
    <location>
        <begin position="28"/>
        <end position="141"/>
    </location>
</feature>
<feature type="short sequence motif" description="Secondary area of contact">
    <location>
        <begin position="76"/>
        <end position="80"/>
    </location>
</feature>
<feature type="site" description="Reactive site">
    <location>
        <position position="32"/>
    </location>
</feature>
<feature type="disulfide bond" evidence="1">
    <location>
        <begin position="94"/>
        <end position="104"/>
    </location>
</feature>
<feature type="disulfide bond" evidence="1">
    <location>
        <begin position="118"/>
        <end position="138"/>
    </location>
</feature>
<feature type="sequence conflict" description="In Ref. 3; AA sequence." evidence="2" ref="3">
    <original>EH</original>
    <variation>QE</variation>
    <location>
        <begin position="114"/>
        <end position="115"/>
    </location>
</feature>
<dbReference type="EMBL" id="M75281">
    <property type="protein sequence ID" value="AAA41068.1"/>
    <property type="molecule type" value="Genomic_DNA"/>
</dbReference>
<dbReference type="EMBL" id="J04206">
    <property type="protein sequence ID" value="AAB59703.1"/>
    <property type="molecule type" value="mRNA"/>
</dbReference>
<dbReference type="PIR" id="JQ1470">
    <property type="entry name" value="JQ1470"/>
</dbReference>
<dbReference type="RefSeq" id="NP_941958.1">
    <property type="nucleotide sequence ID" value="NM_198685.1"/>
</dbReference>
<dbReference type="SMR" id="P19313"/>
<dbReference type="FunCoup" id="P19313">
    <property type="interactions" value="29"/>
</dbReference>
<dbReference type="STRING" id="10116.ENSRNOP00000044719"/>
<dbReference type="PhosphoSitePlus" id="P19313"/>
<dbReference type="PaxDb" id="10116-ENSRNOP00000044719"/>
<dbReference type="Ensembl" id="ENSRNOT00000044345.3">
    <property type="protein sequence ID" value="ENSRNOP00000044719.1"/>
    <property type="gene ID" value="ENSRNOG00000030857.3"/>
</dbReference>
<dbReference type="GeneID" id="296234"/>
<dbReference type="KEGG" id="rno:296234"/>
<dbReference type="UCSC" id="RGD:735160">
    <property type="organism name" value="rat"/>
</dbReference>
<dbReference type="AGR" id="RGD:735160"/>
<dbReference type="CTD" id="296234"/>
<dbReference type="RGD" id="735160">
    <property type="gene designation" value="Cyss"/>
</dbReference>
<dbReference type="eggNOG" id="ENOG502SC50">
    <property type="taxonomic scope" value="Eukaryota"/>
</dbReference>
<dbReference type="GeneTree" id="ENSGT00940000154755"/>
<dbReference type="HOGENOM" id="CLU_118168_0_1_1"/>
<dbReference type="InParanoid" id="P19313"/>
<dbReference type="OMA" id="RTECKKA"/>
<dbReference type="OrthoDB" id="9632677at2759"/>
<dbReference type="PhylomeDB" id="P19313"/>
<dbReference type="PRO" id="PR:P19313"/>
<dbReference type="Proteomes" id="UP000002494">
    <property type="component" value="Chromosome 3"/>
</dbReference>
<dbReference type="GO" id="GO:0005737">
    <property type="term" value="C:cytoplasm"/>
    <property type="evidence" value="ECO:0000318"/>
    <property type="project" value="GO_Central"/>
</dbReference>
<dbReference type="GO" id="GO:0005615">
    <property type="term" value="C:extracellular space"/>
    <property type="evidence" value="ECO:0000314"/>
    <property type="project" value="RGD"/>
</dbReference>
<dbReference type="GO" id="GO:0030141">
    <property type="term" value="C:secretory granule"/>
    <property type="evidence" value="ECO:0000314"/>
    <property type="project" value="RGD"/>
</dbReference>
<dbReference type="GO" id="GO:0031982">
    <property type="term" value="C:vesicle"/>
    <property type="evidence" value="ECO:0000318"/>
    <property type="project" value="GO_Central"/>
</dbReference>
<dbReference type="GO" id="GO:0004869">
    <property type="term" value="F:cysteine-type endopeptidase inhibitor activity"/>
    <property type="evidence" value="ECO:0000314"/>
    <property type="project" value="RGD"/>
</dbReference>
<dbReference type="GO" id="GO:0002020">
    <property type="term" value="F:protease binding"/>
    <property type="evidence" value="ECO:0000314"/>
    <property type="project" value="RGD"/>
</dbReference>
<dbReference type="GO" id="GO:0048468">
    <property type="term" value="P:cell development"/>
    <property type="evidence" value="ECO:0000270"/>
    <property type="project" value="RGD"/>
</dbReference>
<dbReference type="GO" id="GO:0001906">
    <property type="term" value="P:cell killing"/>
    <property type="evidence" value="ECO:0000314"/>
    <property type="project" value="RGD"/>
</dbReference>
<dbReference type="GO" id="GO:0008285">
    <property type="term" value="P:negative regulation of cell population proliferation"/>
    <property type="evidence" value="ECO:0000314"/>
    <property type="project" value="RGD"/>
</dbReference>
<dbReference type="GO" id="GO:0048678">
    <property type="term" value="P:response to axon injury"/>
    <property type="evidence" value="ECO:0000270"/>
    <property type="project" value="RGD"/>
</dbReference>
<dbReference type="GO" id="GO:0046687">
    <property type="term" value="P:response to chromate"/>
    <property type="evidence" value="ECO:0000270"/>
    <property type="project" value="RGD"/>
</dbReference>
<dbReference type="GO" id="GO:0009725">
    <property type="term" value="P:response to hormone"/>
    <property type="evidence" value="ECO:0000270"/>
    <property type="project" value="RGD"/>
</dbReference>
<dbReference type="GO" id="GO:0001562">
    <property type="term" value="P:response to protozoan"/>
    <property type="evidence" value="ECO:0000270"/>
    <property type="project" value="RGD"/>
</dbReference>
<dbReference type="GO" id="GO:0009410">
    <property type="term" value="P:response to xenobiotic stimulus"/>
    <property type="evidence" value="ECO:0000270"/>
    <property type="project" value="RGD"/>
</dbReference>
<dbReference type="GO" id="GO:0007431">
    <property type="term" value="P:salivary gland development"/>
    <property type="evidence" value="ECO:0000270"/>
    <property type="project" value="RGD"/>
</dbReference>
<dbReference type="CDD" id="cd00042">
    <property type="entry name" value="CY"/>
    <property type="match status" value="1"/>
</dbReference>
<dbReference type="FunFam" id="3.10.450.10:FF:000004">
    <property type="entry name" value="Cystatin C"/>
    <property type="match status" value="1"/>
</dbReference>
<dbReference type="Gene3D" id="3.10.450.10">
    <property type="match status" value="1"/>
</dbReference>
<dbReference type="InterPro" id="IPR000010">
    <property type="entry name" value="Cystatin_dom"/>
</dbReference>
<dbReference type="InterPro" id="IPR046350">
    <property type="entry name" value="Cystatin_sf"/>
</dbReference>
<dbReference type="InterPro" id="IPR018073">
    <property type="entry name" value="Prot_inh_cystat_CS"/>
</dbReference>
<dbReference type="PANTHER" id="PTHR46186">
    <property type="entry name" value="CYSTATIN"/>
    <property type="match status" value="1"/>
</dbReference>
<dbReference type="PANTHER" id="PTHR46186:SF6">
    <property type="entry name" value="CYSTATIN-C"/>
    <property type="match status" value="1"/>
</dbReference>
<dbReference type="Pfam" id="PF00031">
    <property type="entry name" value="Cystatin"/>
    <property type="match status" value="1"/>
</dbReference>
<dbReference type="SMART" id="SM00043">
    <property type="entry name" value="CY"/>
    <property type="match status" value="1"/>
</dbReference>
<dbReference type="SUPFAM" id="SSF54403">
    <property type="entry name" value="Cystatin/monellin"/>
    <property type="match status" value="1"/>
</dbReference>
<dbReference type="PROSITE" id="PS00287">
    <property type="entry name" value="CYSTATIN"/>
    <property type="match status" value="1"/>
</dbReference>